<comment type="subcellular location">
    <subcellularLocation>
        <location>Secreted</location>
    </subcellularLocation>
</comment>
<comment type="allergen">
    <text>Causes an allergic reaction in human. Common symptoms of mite allergy are bronchial asthma, allergic rhinitis and conjunctivitis.</text>
</comment>
<comment type="similarity">
    <text evidence="2">Belongs to the mite group 7 allergen family.</text>
</comment>
<protein>
    <recommendedName>
        <fullName>Mite allergen Lep d 7</fullName>
    </recommendedName>
    <allergenName>Lep d 7</allergenName>
</protein>
<dbReference type="EMBL" id="AJ271058">
    <property type="protein sequence ID" value="CAB65963.1"/>
    <property type="molecule type" value="mRNA"/>
</dbReference>
<dbReference type="SMR" id="Q9U1G2"/>
<dbReference type="Allergome" id="3351">
    <property type="allergen name" value="Lep d 7.0101"/>
</dbReference>
<dbReference type="Allergome" id="445">
    <property type="allergen name" value="Lep d 7"/>
</dbReference>
<dbReference type="GO" id="GO:0005576">
    <property type="term" value="C:extracellular region"/>
    <property type="evidence" value="ECO:0007669"/>
    <property type="project" value="UniProtKB-SubCell"/>
</dbReference>
<dbReference type="Gene3D" id="3.15.10.50">
    <property type="match status" value="1"/>
</dbReference>
<dbReference type="InterPro" id="IPR038602">
    <property type="entry name" value="Mite_allergen_7_sf"/>
</dbReference>
<dbReference type="InterPro" id="IPR020234">
    <property type="entry name" value="Mite_allergen_group-7"/>
</dbReference>
<dbReference type="Pfam" id="PF16984">
    <property type="entry name" value="Grp7_allergen"/>
    <property type="match status" value="1"/>
</dbReference>
<accession>Q9U1G2</accession>
<evidence type="ECO:0000255" key="1"/>
<evidence type="ECO:0000305" key="2"/>
<feature type="signal peptide" evidence="1">
    <location>
        <begin position="1"/>
        <end position="19"/>
    </location>
</feature>
<feature type="chain" id="PRO_0000001186" description="Mite allergen Lep d 7">
    <location>
        <begin position="20"/>
        <end position="216"/>
    </location>
</feature>
<organism>
    <name type="scientific">Lepidoglyphus destructor</name>
    <name type="common">Storage mite</name>
    <name type="synonym">Glycyphagus destructor</name>
    <dbReference type="NCBI Taxonomy" id="36936"/>
    <lineage>
        <taxon>Eukaryota</taxon>
        <taxon>Metazoa</taxon>
        <taxon>Ecdysozoa</taxon>
        <taxon>Arthropoda</taxon>
        <taxon>Chelicerata</taxon>
        <taxon>Arachnida</taxon>
        <taxon>Acari</taxon>
        <taxon>Acariformes</taxon>
        <taxon>Sarcoptiformes</taxon>
        <taxon>Astigmata</taxon>
        <taxon>Glycyphagoidea</taxon>
        <taxon>Glycyphagidae</taxon>
        <taxon>Lepidoglyphus</taxon>
    </lineage>
</organism>
<name>ALL7_LEPDS</name>
<reference key="1">
    <citation type="journal article" date="2001" name="Eur. J. Biochem.">
        <title>Cloning of three new allergens from the dust mite Lepidoglyphus destructor using phage surface display technology.</title>
        <authorList>
            <person name="Eriksson T.L.J."/>
            <person name="Rasool O."/>
            <person name="Huecas S."/>
            <person name="Whitley P."/>
            <person name="Crameri R."/>
            <person name="Appenzeller U."/>
            <person name="Gafvelin G."/>
            <person name="van Hage-Hamsten M."/>
        </authorList>
    </citation>
    <scope>NUCLEOTIDE SEQUENCE [MRNA]</scope>
</reference>
<keyword id="KW-0020">Allergen</keyword>
<keyword id="KW-0964">Secreted</keyword>
<keyword id="KW-0732">Signal</keyword>
<sequence length="216" mass="23916">MQYLAIAVIVALAGLSAAAHKPAYYDDNMANQMVDQIVKSLTTKKELDPFKIEQTKVPIDKKIGLIHIKGSATIKNAVITGLSHISRRGDAKIDTDGGAFAATLKLGDKNIRIKTDLHLDLGKIIHPNLKFEGHIGDIDMKLKLKLDAEGKPSLDQFEIDEFEQVELFIHGLGPLDPLVDVIADSFVKYFNPQARKLVTDMLKPILVEEIKKLKLN</sequence>
<proteinExistence type="evidence at protein level"/>